<reference key="1">
    <citation type="journal article" date="1999" name="Proc. Natl. Acad. Sci. U.S.A.">
        <title>The complete chloroplast DNA sequence of the green alga Nephroselmis olivacea: insights into the architecture of ancestral chloroplast genomes.</title>
        <authorList>
            <person name="Turmel M."/>
            <person name="Otis C."/>
            <person name="Lemieux C."/>
        </authorList>
    </citation>
    <scope>NUCLEOTIDE SEQUENCE [LARGE SCALE GENOMIC DNA]</scope>
    <source>
        <strain>NIES-484 / S-N-5-8</strain>
    </source>
</reference>
<evidence type="ECO:0000255" key="1">
    <source>
        <dbReference type="HAMAP-Rule" id="MF_01338"/>
    </source>
</evidence>
<comment type="function">
    <text evidence="1">RuBisCO catalyzes two reactions: the carboxylation of D-ribulose 1,5-bisphosphate, the primary event in carbon dioxide fixation, as well as the oxidative fragmentation of the pentose substrate in the photorespiration process. Both reactions occur simultaneously and in competition at the same active site.</text>
</comment>
<comment type="catalytic activity">
    <reaction evidence="1">
        <text>2 (2R)-3-phosphoglycerate + 2 H(+) = D-ribulose 1,5-bisphosphate + CO2 + H2O</text>
        <dbReference type="Rhea" id="RHEA:23124"/>
        <dbReference type="ChEBI" id="CHEBI:15377"/>
        <dbReference type="ChEBI" id="CHEBI:15378"/>
        <dbReference type="ChEBI" id="CHEBI:16526"/>
        <dbReference type="ChEBI" id="CHEBI:57870"/>
        <dbReference type="ChEBI" id="CHEBI:58272"/>
        <dbReference type="EC" id="4.1.1.39"/>
    </reaction>
</comment>
<comment type="catalytic activity">
    <reaction evidence="1">
        <text>D-ribulose 1,5-bisphosphate + O2 = 2-phosphoglycolate + (2R)-3-phosphoglycerate + 2 H(+)</text>
        <dbReference type="Rhea" id="RHEA:36631"/>
        <dbReference type="ChEBI" id="CHEBI:15378"/>
        <dbReference type="ChEBI" id="CHEBI:15379"/>
        <dbReference type="ChEBI" id="CHEBI:57870"/>
        <dbReference type="ChEBI" id="CHEBI:58033"/>
        <dbReference type="ChEBI" id="CHEBI:58272"/>
    </reaction>
</comment>
<comment type="cofactor">
    <cofactor evidence="1">
        <name>Mg(2+)</name>
        <dbReference type="ChEBI" id="CHEBI:18420"/>
    </cofactor>
    <text evidence="1">Binds 1 Mg(2+) ion per subunit.</text>
</comment>
<comment type="subunit">
    <text evidence="1">Heterohexadecamer of 8 large chains and 8 small chains.</text>
</comment>
<comment type="subcellular location">
    <subcellularLocation>
        <location>Plastid</location>
        <location>Chloroplast</location>
    </subcellularLocation>
</comment>
<comment type="miscellaneous">
    <text evidence="1">The basic functional RuBisCO is composed of a large chain homodimer in a 'head-to-tail' conformation. In form I RuBisCO this homodimer is arranged in a barrel-like tetramer with the small subunits forming a tetrameric 'cap' on each end of the 'barrel'.</text>
</comment>
<comment type="similarity">
    <text evidence="1">Belongs to the RuBisCO large chain family. Type I subfamily.</text>
</comment>
<keyword id="KW-0007">Acetylation</keyword>
<keyword id="KW-0113">Calvin cycle</keyword>
<keyword id="KW-0120">Carbon dioxide fixation</keyword>
<keyword id="KW-0150">Chloroplast</keyword>
<keyword id="KW-0456">Lyase</keyword>
<keyword id="KW-0460">Magnesium</keyword>
<keyword id="KW-0479">Metal-binding</keyword>
<keyword id="KW-0488">Methylation</keyword>
<keyword id="KW-0503">Monooxygenase</keyword>
<keyword id="KW-0560">Oxidoreductase</keyword>
<keyword id="KW-0601">Photorespiration</keyword>
<keyword id="KW-0602">Photosynthesis</keyword>
<keyword id="KW-0934">Plastid</keyword>
<accession>Q9T4F2</accession>
<sequence>MAPQTETQAKAGFKAGVKDYRLTYYTPDYQVKDTDILAAFRMTPQPGVPPEECGAAVAAESSTGTWTTVWTDGLTSLDRYKGRCYDLEPVAGEDNQYIAYVAYPLDLFEEGSVTNLFTSIVGNVFGFKALRALRLEDLRISVAYCKTFQGAPHGIQVERDKLNKYGRGLLGCTIKPKLGLSAKNYGRAVYECLRGGLDFTKDDENVNSQPFMRWRDRFLFCAEAIYKAQAETGEIKGHYLNATAGTSEEMLKRAVFAKELGVPIIMHDYLTGGFTANTSLAYYCRDNGLLLHIHRAMHAVIDRQRNHGIHFRVLAKALRLSGGDHLHSGTVVGKLEGEREVTLGFVDLMRDAYVEKDRSRGIYFTQDWASLPGVMPVASGGIHVWHMPALVEIFGDDACLQFGGGTLGHPWGNAPGAAANRVALEACTQARNEGRDLAREGGDVIRAACKWSPELAAACEVWKEIKFEFDTVDTL</sequence>
<dbReference type="EC" id="4.1.1.39" evidence="1"/>
<dbReference type="EMBL" id="AF137379">
    <property type="protein sequence ID" value="AAD54860.1"/>
    <property type="molecule type" value="Genomic_DNA"/>
</dbReference>
<dbReference type="EMBL" id="AF137379">
    <property type="protein sequence ID" value="AAD54929.1"/>
    <property type="molecule type" value="Genomic_DNA"/>
</dbReference>
<dbReference type="RefSeq" id="NP_050889.1">
    <property type="nucleotide sequence ID" value="NC_000927.1"/>
</dbReference>
<dbReference type="RefSeq" id="NP_050958.1">
    <property type="nucleotide sequence ID" value="NC_000927.1"/>
</dbReference>
<dbReference type="SMR" id="Q9T4F2"/>
<dbReference type="GeneID" id="801942"/>
<dbReference type="GeneID" id="801974"/>
<dbReference type="GO" id="GO:0009507">
    <property type="term" value="C:chloroplast"/>
    <property type="evidence" value="ECO:0007669"/>
    <property type="project" value="UniProtKB-SubCell"/>
</dbReference>
<dbReference type="GO" id="GO:0000287">
    <property type="term" value="F:magnesium ion binding"/>
    <property type="evidence" value="ECO:0007669"/>
    <property type="project" value="UniProtKB-UniRule"/>
</dbReference>
<dbReference type="GO" id="GO:0004497">
    <property type="term" value="F:monooxygenase activity"/>
    <property type="evidence" value="ECO:0007669"/>
    <property type="project" value="UniProtKB-KW"/>
</dbReference>
<dbReference type="GO" id="GO:0016984">
    <property type="term" value="F:ribulose-bisphosphate carboxylase activity"/>
    <property type="evidence" value="ECO:0007669"/>
    <property type="project" value="UniProtKB-UniRule"/>
</dbReference>
<dbReference type="GO" id="GO:0009853">
    <property type="term" value="P:photorespiration"/>
    <property type="evidence" value="ECO:0007669"/>
    <property type="project" value="UniProtKB-KW"/>
</dbReference>
<dbReference type="GO" id="GO:0019253">
    <property type="term" value="P:reductive pentose-phosphate cycle"/>
    <property type="evidence" value="ECO:0007669"/>
    <property type="project" value="UniProtKB-UniRule"/>
</dbReference>
<dbReference type="CDD" id="cd08212">
    <property type="entry name" value="RuBisCO_large_I"/>
    <property type="match status" value="1"/>
</dbReference>
<dbReference type="FunFam" id="3.20.20.110:FF:000001">
    <property type="entry name" value="Ribulose bisphosphate carboxylase large chain"/>
    <property type="match status" value="1"/>
</dbReference>
<dbReference type="FunFam" id="3.30.70.150:FF:000001">
    <property type="entry name" value="Ribulose bisphosphate carboxylase large chain"/>
    <property type="match status" value="1"/>
</dbReference>
<dbReference type="Gene3D" id="3.20.20.110">
    <property type="entry name" value="Ribulose bisphosphate carboxylase, large subunit, C-terminal domain"/>
    <property type="match status" value="1"/>
</dbReference>
<dbReference type="Gene3D" id="3.30.70.150">
    <property type="entry name" value="RuBisCO large subunit, N-terminal domain"/>
    <property type="match status" value="1"/>
</dbReference>
<dbReference type="HAMAP" id="MF_01338">
    <property type="entry name" value="RuBisCO_L_type1"/>
    <property type="match status" value="1"/>
</dbReference>
<dbReference type="InterPro" id="IPR033966">
    <property type="entry name" value="RuBisCO"/>
</dbReference>
<dbReference type="InterPro" id="IPR020878">
    <property type="entry name" value="RuBisCo_large_chain_AS"/>
</dbReference>
<dbReference type="InterPro" id="IPR000685">
    <property type="entry name" value="RuBisCO_lsu_C"/>
</dbReference>
<dbReference type="InterPro" id="IPR036376">
    <property type="entry name" value="RuBisCO_lsu_C_sf"/>
</dbReference>
<dbReference type="InterPro" id="IPR017443">
    <property type="entry name" value="RuBisCO_lsu_fd_N"/>
</dbReference>
<dbReference type="InterPro" id="IPR036422">
    <property type="entry name" value="RuBisCO_lsu_N_sf"/>
</dbReference>
<dbReference type="InterPro" id="IPR020888">
    <property type="entry name" value="RuBisCO_lsuI"/>
</dbReference>
<dbReference type="NCBIfam" id="NF003252">
    <property type="entry name" value="PRK04208.1"/>
    <property type="match status" value="1"/>
</dbReference>
<dbReference type="PANTHER" id="PTHR42704">
    <property type="entry name" value="RIBULOSE BISPHOSPHATE CARBOXYLASE"/>
    <property type="match status" value="1"/>
</dbReference>
<dbReference type="PANTHER" id="PTHR42704:SF17">
    <property type="entry name" value="RIBULOSE BISPHOSPHATE CARBOXYLASE LARGE CHAIN"/>
    <property type="match status" value="1"/>
</dbReference>
<dbReference type="Pfam" id="PF00016">
    <property type="entry name" value="RuBisCO_large"/>
    <property type="match status" value="1"/>
</dbReference>
<dbReference type="Pfam" id="PF02788">
    <property type="entry name" value="RuBisCO_large_N"/>
    <property type="match status" value="1"/>
</dbReference>
<dbReference type="SFLD" id="SFLDG01052">
    <property type="entry name" value="RuBisCO"/>
    <property type="match status" value="1"/>
</dbReference>
<dbReference type="SFLD" id="SFLDS00014">
    <property type="entry name" value="RuBisCO"/>
    <property type="match status" value="1"/>
</dbReference>
<dbReference type="SFLD" id="SFLDG00301">
    <property type="entry name" value="RuBisCO-like_proteins"/>
    <property type="match status" value="1"/>
</dbReference>
<dbReference type="SUPFAM" id="SSF51649">
    <property type="entry name" value="RuBisCo, C-terminal domain"/>
    <property type="match status" value="1"/>
</dbReference>
<dbReference type="SUPFAM" id="SSF54966">
    <property type="entry name" value="RuBisCO, large subunit, small (N-terminal) domain"/>
    <property type="match status" value="1"/>
</dbReference>
<dbReference type="PROSITE" id="PS00157">
    <property type="entry name" value="RUBISCO_LARGE"/>
    <property type="match status" value="1"/>
</dbReference>
<protein>
    <recommendedName>
        <fullName evidence="1">Ribulose bisphosphate carboxylase large chain</fullName>
        <shortName evidence="1">RuBisCO large subunit</shortName>
        <ecNumber evidence="1">4.1.1.39</ecNumber>
    </recommendedName>
</protein>
<feature type="propeptide" id="PRO_0000031315" evidence="1">
    <location>
        <begin position="1"/>
        <end position="2"/>
    </location>
</feature>
<feature type="chain" id="PRO_0000031316" description="Ribulose bisphosphate carboxylase large chain">
    <location>
        <begin position="3"/>
        <end position="475"/>
    </location>
</feature>
<feature type="active site" description="Proton acceptor" evidence="1">
    <location>
        <position position="175"/>
    </location>
</feature>
<feature type="active site" description="Proton acceptor" evidence="1">
    <location>
        <position position="294"/>
    </location>
</feature>
<feature type="binding site" description="in homodimeric partner" evidence="1">
    <location>
        <position position="123"/>
    </location>
    <ligand>
        <name>substrate</name>
    </ligand>
</feature>
<feature type="binding site" evidence="1">
    <location>
        <position position="173"/>
    </location>
    <ligand>
        <name>substrate</name>
    </ligand>
</feature>
<feature type="binding site" evidence="1">
    <location>
        <position position="177"/>
    </location>
    <ligand>
        <name>substrate</name>
    </ligand>
</feature>
<feature type="binding site" description="via carbamate group" evidence="1">
    <location>
        <position position="201"/>
    </location>
    <ligand>
        <name>Mg(2+)</name>
        <dbReference type="ChEBI" id="CHEBI:18420"/>
    </ligand>
</feature>
<feature type="binding site" evidence="1">
    <location>
        <position position="203"/>
    </location>
    <ligand>
        <name>Mg(2+)</name>
        <dbReference type="ChEBI" id="CHEBI:18420"/>
    </ligand>
</feature>
<feature type="binding site" evidence="1">
    <location>
        <position position="204"/>
    </location>
    <ligand>
        <name>Mg(2+)</name>
        <dbReference type="ChEBI" id="CHEBI:18420"/>
    </ligand>
</feature>
<feature type="binding site" evidence="1">
    <location>
        <position position="295"/>
    </location>
    <ligand>
        <name>substrate</name>
    </ligand>
</feature>
<feature type="binding site" evidence="1">
    <location>
        <position position="327"/>
    </location>
    <ligand>
        <name>substrate</name>
    </ligand>
</feature>
<feature type="binding site" evidence="1">
    <location>
        <position position="379"/>
    </location>
    <ligand>
        <name>substrate</name>
    </ligand>
</feature>
<feature type="site" description="Transition state stabilizer" evidence="1">
    <location>
        <position position="334"/>
    </location>
</feature>
<feature type="modified residue" description="N-acetylproline" evidence="1">
    <location>
        <position position="3"/>
    </location>
</feature>
<feature type="modified residue" description="N6,N6,N6-trimethyllysine" evidence="1">
    <location>
        <position position="14"/>
    </location>
</feature>
<feature type="modified residue" description="N6-carboxylysine" evidence="1">
    <location>
        <position position="201"/>
    </location>
</feature>
<proteinExistence type="inferred from homology"/>
<geneLocation type="chloroplast"/>
<organism>
    <name type="scientific">Nephroselmis olivacea</name>
    <name type="common">Green alga</name>
    <dbReference type="NCBI Taxonomy" id="31312"/>
    <lineage>
        <taxon>Eukaryota</taxon>
        <taxon>Viridiplantae</taxon>
        <taxon>Chlorophyta</taxon>
        <taxon>Nephroselmidophyceae</taxon>
        <taxon>Nephroselmidales</taxon>
        <taxon>Nephroselmidaceae</taxon>
        <taxon>Nephroselmis</taxon>
    </lineage>
</organism>
<name>RBL_NEPOL</name>
<gene>
    <name evidence="1" type="primary">rbcL-A</name>
</gene>
<gene>
    <name evidence="1" type="primary">rbcL</name>
    <name evidence="1" type="synonym">rbcL-B</name>
</gene>